<accession>Q9FG68</accession>
<accession>A5YZ30</accession>
<accession>A5YZ33</accession>
<accession>A5YZ38</accession>
<accession>A5YZ50</accession>
<accession>A5YZ51</accession>
<accession>Q70YU8</accession>
<accession>Q70YV2</accession>
<accession>Q70YV7</accession>
<accession>Q70YV9</accession>
<accession>Q70YW0</accession>
<accession>Q70YW1</accession>
<accession>Q9ZTE5</accession>
<evidence type="ECO:0000255" key="1">
    <source>
        <dbReference type="PROSITE-ProRule" id="PRU00625"/>
    </source>
</evidence>
<evidence type="ECO:0000256" key="2">
    <source>
        <dbReference type="SAM" id="MobiDB-lite"/>
    </source>
</evidence>
<evidence type="ECO:0000269" key="3">
    <source>
    </source>
</evidence>
<evidence type="ECO:0000269" key="4">
    <source>
    </source>
</evidence>
<evidence type="ECO:0000269" key="5">
    <source>
    </source>
</evidence>
<evidence type="ECO:0000269" key="6">
    <source>
    </source>
</evidence>
<evidence type="ECO:0000305" key="7"/>
<name>RAX1_ARATH</name>
<dbReference type="EMBL" id="AJ131517">
    <property type="protein sequence ID" value="CAC80101.1"/>
    <property type="molecule type" value="Genomic_DNA"/>
</dbReference>
<dbReference type="EMBL" id="AY519628">
    <property type="protein sequence ID" value="AAS10098.1"/>
    <property type="molecule type" value="mRNA"/>
</dbReference>
<dbReference type="EMBL" id="AB026660">
    <property type="protein sequence ID" value="BAB08873.1"/>
    <property type="molecule type" value="Genomic_DNA"/>
</dbReference>
<dbReference type="EMBL" id="CP002688">
    <property type="protein sequence ID" value="AED93106.1"/>
    <property type="molecule type" value="Genomic_DNA"/>
</dbReference>
<dbReference type="EMBL" id="DQ446976">
    <property type="protein sequence ID" value="ABE66175.1"/>
    <property type="molecule type" value="mRNA"/>
</dbReference>
<dbReference type="EMBL" id="AK175507">
    <property type="protein sequence ID" value="BAD43270.1"/>
    <property type="molecule type" value="mRNA"/>
</dbReference>
<dbReference type="EMBL" id="AF062879">
    <property type="protein sequence ID" value="AAC83601.1"/>
    <property type="molecule type" value="mRNA"/>
</dbReference>
<dbReference type="EMBL" id="AJ486900">
    <property type="protein sequence ID" value="CAD31158.1"/>
    <property type="molecule type" value="Genomic_DNA"/>
</dbReference>
<dbReference type="EMBL" id="AJ486901">
    <property type="protein sequence ID" value="CAD31159.1"/>
    <property type="molecule type" value="Genomic_DNA"/>
</dbReference>
<dbReference type="EMBL" id="AJ486902">
    <property type="protein sequence ID" value="CAD31160.1"/>
    <property type="molecule type" value="Genomic_DNA"/>
</dbReference>
<dbReference type="EMBL" id="AJ486903">
    <property type="protein sequence ID" value="CAD31161.1"/>
    <property type="molecule type" value="Genomic_DNA"/>
</dbReference>
<dbReference type="EMBL" id="AJ486904">
    <property type="protein sequence ID" value="CAD31162.1"/>
    <property type="molecule type" value="Genomic_DNA"/>
</dbReference>
<dbReference type="EMBL" id="AJ486905">
    <property type="protein sequence ID" value="CAD31163.1"/>
    <property type="molecule type" value="Genomic_DNA"/>
</dbReference>
<dbReference type="EMBL" id="AJ486906">
    <property type="protein sequence ID" value="CAD31164.1"/>
    <property type="molecule type" value="Genomic_DNA"/>
</dbReference>
<dbReference type="EMBL" id="AJ486907">
    <property type="protein sequence ID" value="CAD31165.1"/>
    <property type="molecule type" value="Genomic_DNA"/>
</dbReference>
<dbReference type="EMBL" id="AJ486908">
    <property type="protein sequence ID" value="CAD31166.1"/>
    <property type="molecule type" value="Genomic_DNA"/>
</dbReference>
<dbReference type="EMBL" id="AJ486909">
    <property type="protein sequence ID" value="CAD31167.1"/>
    <property type="molecule type" value="Genomic_DNA"/>
</dbReference>
<dbReference type="EMBL" id="AJ486910">
    <property type="protein sequence ID" value="CAD31168.1"/>
    <property type="molecule type" value="Genomic_DNA"/>
</dbReference>
<dbReference type="EMBL" id="AJ486911">
    <property type="protein sequence ID" value="CAD31169.1"/>
    <property type="molecule type" value="Genomic_DNA"/>
</dbReference>
<dbReference type="EMBL" id="AJ486912">
    <property type="protein sequence ID" value="CAD31170.1"/>
    <property type="molecule type" value="Genomic_DNA"/>
</dbReference>
<dbReference type="EMBL" id="AJ486913">
    <property type="protein sequence ID" value="CAD31171.1"/>
    <property type="molecule type" value="Genomic_DNA"/>
</dbReference>
<dbReference type="EMBL" id="AJ486914">
    <property type="protein sequence ID" value="CAD31172.1"/>
    <property type="molecule type" value="Genomic_DNA"/>
</dbReference>
<dbReference type="EMBL" id="AJ486915">
    <property type="protein sequence ID" value="CAD31173.1"/>
    <property type="molecule type" value="Genomic_DNA"/>
</dbReference>
<dbReference type="EMBL" id="AJ486916">
    <property type="protein sequence ID" value="CAD31174.1"/>
    <property type="molecule type" value="Genomic_DNA"/>
</dbReference>
<dbReference type="EMBL" id="AJ486917">
    <property type="protein sequence ID" value="CAD31175.1"/>
    <property type="molecule type" value="Genomic_DNA"/>
</dbReference>
<dbReference type="EMBL" id="AJ486918">
    <property type="protein sequence ID" value="CAD31176.1"/>
    <property type="molecule type" value="Genomic_DNA"/>
</dbReference>
<dbReference type="EMBL" id="AJ486919">
    <property type="protein sequence ID" value="CAD31177.1"/>
    <property type="molecule type" value="Genomic_DNA"/>
</dbReference>
<dbReference type="EMBL" id="AJ486920">
    <property type="protein sequence ID" value="CAD31178.1"/>
    <property type="molecule type" value="Genomic_DNA"/>
</dbReference>
<dbReference type="EMBL" id="AJ486921">
    <property type="protein sequence ID" value="CAD31179.1"/>
    <property type="molecule type" value="Genomic_DNA"/>
</dbReference>
<dbReference type="EMBL" id="AJ486922">
    <property type="protein sequence ID" value="CAD31180.1"/>
    <property type="molecule type" value="Genomic_DNA"/>
</dbReference>
<dbReference type="EMBL" id="AJ486923">
    <property type="protein sequence ID" value="CAD31181.1"/>
    <property type="molecule type" value="Genomic_DNA"/>
</dbReference>
<dbReference type="EMBL" id="AJ486924">
    <property type="protein sequence ID" value="CAD31182.1"/>
    <property type="molecule type" value="Genomic_DNA"/>
</dbReference>
<dbReference type="EMBL" id="AJ486925">
    <property type="protein sequence ID" value="CAD31183.1"/>
    <property type="molecule type" value="Genomic_DNA"/>
</dbReference>
<dbReference type="EMBL" id="AJ486926">
    <property type="protein sequence ID" value="CAD31184.1"/>
    <property type="molecule type" value="Genomic_DNA"/>
</dbReference>
<dbReference type="EMBL" id="AJ486927">
    <property type="protein sequence ID" value="CAD31185.1"/>
    <property type="molecule type" value="Genomic_DNA"/>
</dbReference>
<dbReference type="EMBL" id="AJ486928">
    <property type="protein sequence ID" value="CAD31186.1"/>
    <property type="molecule type" value="Genomic_DNA"/>
</dbReference>
<dbReference type="EMBL" id="AJ486929">
    <property type="protein sequence ID" value="CAD31187.1"/>
    <property type="molecule type" value="Genomic_DNA"/>
</dbReference>
<dbReference type="EMBL" id="AJ486930">
    <property type="protein sequence ID" value="CAD31188.1"/>
    <property type="molecule type" value="Genomic_DNA"/>
</dbReference>
<dbReference type="EMBL" id="AJ486931">
    <property type="protein sequence ID" value="CAD31189.1"/>
    <property type="molecule type" value="Genomic_DNA"/>
</dbReference>
<dbReference type="EMBL" id="AJ486932">
    <property type="protein sequence ID" value="CAD31190.1"/>
    <property type="molecule type" value="Genomic_DNA"/>
</dbReference>
<dbReference type="EMBL" id="AJ486933">
    <property type="protein sequence ID" value="CAD31191.1"/>
    <property type="molecule type" value="Genomic_DNA"/>
</dbReference>
<dbReference type="EMBL" id="AJ486934">
    <property type="protein sequence ID" value="CAD31192.1"/>
    <property type="molecule type" value="Genomic_DNA"/>
</dbReference>
<dbReference type="EMBL" id="AJ486935">
    <property type="protein sequence ID" value="CAD31193.1"/>
    <property type="molecule type" value="Genomic_DNA"/>
</dbReference>
<dbReference type="EMBL" id="AJ486936">
    <property type="protein sequence ID" value="CAD31194.1"/>
    <property type="molecule type" value="Genomic_DNA"/>
</dbReference>
<dbReference type="EMBL" id="EF598612">
    <property type="protein sequence ID" value="ABQ85336.1"/>
    <property type="molecule type" value="Genomic_DNA"/>
</dbReference>
<dbReference type="EMBL" id="EF598613">
    <property type="protein sequence ID" value="ABQ85337.1"/>
    <property type="molecule type" value="Genomic_DNA"/>
</dbReference>
<dbReference type="EMBL" id="EF598614">
    <property type="protein sequence ID" value="ABQ85338.1"/>
    <property type="molecule type" value="Genomic_DNA"/>
</dbReference>
<dbReference type="EMBL" id="EF598615">
    <property type="protein sequence ID" value="ABQ85339.1"/>
    <property type="molecule type" value="Genomic_DNA"/>
</dbReference>
<dbReference type="EMBL" id="EF598616">
    <property type="protein sequence ID" value="ABQ85340.1"/>
    <property type="molecule type" value="Genomic_DNA"/>
</dbReference>
<dbReference type="EMBL" id="EF598617">
    <property type="protein sequence ID" value="ABQ85341.1"/>
    <property type="molecule type" value="Genomic_DNA"/>
</dbReference>
<dbReference type="EMBL" id="EF598618">
    <property type="protein sequence ID" value="ABQ85342.1"/>
    <property type="molecule type" value="Genomic_DNA"/>
</dbReference>
<dbReference type="EMBL" id="EF598619">
    <property type="protein sequence ID" value="ABQ85343.1"/>
    <property type="molecule type" value="Genomic_DNA"/>
</dbReference>
<dbReference type="EMBL" id="EF598620">
    <property type="protein sequence ID" value="ABQ85344.1"/>
    <property type="molecule type" value="Genomic_DNA"/>
</dbReference>
<dbReference type="EMBL" id="EF598621">
    <property type="protein sequence ID" value="ABQ85345.1"/>
    <property type="molecule type" value="Genomic_DNA"/>
</dbReference>
<dbReference type="EMBL" id="EF598622">
    <property type="protein sequence ID" value="ABQ85346.1"/>
    <property type="molecule type" value="Genomic_DNA"/>
</dbReference>
<dbReference type="EMBL" id="EF598623">
    <property type="protein sequence ID" value="ABQ85347.1"/>
    <property type="molecule type" value="Genomic_DNA"/>
</dbReference>
<dbReference type="EMBL" id="EF598624">
    <property type="protein sequence ID" value="ABQ85348.1"/>
    <property type="molecule type" value="Genomic_DNA"/>
</dbReference>
<dbReference type="EMBL" id="EF598625">
    <property type="protein sequence ID" value="ABQ85349.1"/>
    <property type="molecule type" value="Genomic_DNA"/>
</dbReference>
<dbReference type="EMBL" id="EF598626">
    <property type="protein sequence ID" value="ABQ85350.1"/>
    <property type="molecule type" value="Genomic_DNA"/>
</dbReference>
<dbReference type="EMBL" id="EF598627">
    <property type="protein sequence ID" value="ABQ85351.1"/>
    <property type="molecule type" value="Genomic_DNA"/>
</dbReference>
<dbReference type="EMBL" id="EF598628">
    <property type="protein sequence ID" value="ABQ85352.1"/>
    <property type="molecule type" value="Genomic_DNA"/>
</dbReference>
<dbReference type="EMBL" id="EF598629">
    <property type="protein sequence ID" value="ABQ85353.1"/>
    <property type="molecule type" value="Genomic_DNA"/>
</dbReference>
<dbReference type="EMBL" id="EF598630">
    <property type="protein sequence ID" value="ABQ85354.1"/>
    <property type="molecule type" value="Genomic_DNA"/>
</dbReference>
<dbReference type="EMBL" id="EF598631">
    <property type="protein sequence ID" value="ABQ85355.1"/>
    <property type="molecule type" value="Genomic_DNA"/>
</dbReference>
<dbReference type="EMBL" id="EF598632">
    <property type="protein sequence ID" value="ABQ85356.1"/>
    <property type="molecule type" value="Genomic_DNA"/>
</dbReference>
<dbReference type="EMBL" id="EF598633">
    <property type="protein sequence ID" value="ABQ85357.1"/>
    <property type="molecule type" value="Genomic_DNA"/>
</dbReference>
<dbReference type="EMBL" id="EF598634">
    <property type="protein sequence ID" value="ABQ85358.1"/>
    <property type="molecule type" value="Genomic_DNA"/>
</dbReference>
<dbReference type="EMBL" id="EF598635">
    <property type="protein sequence ID" value="ABQ85359.1"/>
    <property type="molecule type" value="Genomic_DNA"/>
</dbReference>
<dbReference type="PIR" id="T51651">
    <property type="entry name" value="T51651"/>
</dbReference>
<dbReference type="RefSeq" id="NP_197691.1">
    <property type="nucleotide sequence ID" value="NM_122206.4"/>
</dbReference>
<dbReference type="SMR" id="Q9FG68"/>
<dbReference type="BioGRID" id="17639">
    <property type="interactions" value="10"/>
</dbReference>
<dbReference type="IntAct" id="Q9FG68">
    <property type="interactions" value="12"/>
</dbReference>
<dbReference type="STRING" id="3702.Q9FG68"/>
<dbReference type="iPTMnet" id="Q9FG68"/>
<dbReference type="PaxDb" id="3702-AT5G23000.1"/>
<dbReference type="EnsemblPlants" id="AT5G23000.1">
    <property type="protein sequence ID" value="AT5G23000.1"/>
    <property type="gene ID" value="AT5G23000"/>
</dbReference>
<dbReference type="GeneID" id="832364"/>
<dbReference type="Gramene" id="AT5G23000.1">
    <property type="protein sequence ID" value="AT5G23000.1"/>
    <property type="gene ID" value="AT5G23000"/>
</dbReference>
<dbReference type="KEGG" id="ath:AT5G23000"/>
<dbReference type="Araport" id="AT5G23000"/>
<dbReference type="TAIR" id="AT5G23000">
    <property type="gene designation" value="MYB37"/>
</dbReference>
<dbReference type="eggNOG" id="KOG0048">
    <property type="taxonomic scope" value="Eukaryota"/>
</dbReference>
<dbReference type="HOGENOM" id="CLU_028567_6_2_1"/>
<dbReference type="InParanoid" id="Q9FG68"/>
<dbReference type="OMA" id="LLLEYKC"/>
<dbReference type="PhylomeDB" id="Q9FG68"/>
<dbReference type="PRO" id="PR:Q9FG68"/>
<dbReference type="Proteomes" id="UP000006548">
    <property type="component" value="Chromosome 5"/>
</dbReference>
<dbReference type="ExpressionAtlas" id="Q9FG68">
    <property type="expression patterns" value="baseline and differential"/>
</dbReference>
<dbReference type="GO" id="GO:0005634">
    <property type="term" value="C:nucleus"/>
    <property type="evidence" value="ECO:0007669"/>
    <property type="project" value="UniProtKB-SubCell"/>
</dbReference>
<dbReference type="GO" id="GO:0003677">
    <property type="term" value="F:DNA binding"/>
    <property type="evidence" value="ECO:0007669"/>
    <property type="project" value="UniProtKB-KW"/>
</dbReference>
<dbReference type="GO" id="GO:0003700">
    <property type="term" value="F:DNA-binding transcription factor activity"/>
    <property type="evidence" value="ECO:0000250"/>
    <property type="project" value="TAIR"/>
</dbReference>
<dbReference type="GO" id="GO:0090506">
    <property type="term" value="P:axillary shoot meristem initiation"/>
    <property type="evidence" value="ECO:0000316"/>
    <property type="project" value="TAIR"/>
</dbReference>
<dbReference type="CDD" id="cd00167">
    <property type="entry name" value="SANT"/>
    <property type="match status" value="2"/>
</dbReference>
<dbReference type="FunFam" id="1.10.10.60:FF:000388">
    <property type="entry name" value="Transcription factor RAX2"/>
    <property type="match status" value="1"/>
</dbReference>
<dbReference type="FunFam" id="1.10.10.60:FF:000015">
    <property type="entry name" value="Transcription factor RAX3"/>
    <property type="match status" value="1"/>
</dbReference>
<dbReference type="Gene3D" id="1.10.10.60">
    <property type="entry name" value="Homeodomain-like"/>
    <property type="match status" value="2"/>
</dbReference>
<dbReference type="InterPro" id="IPR009057">
    <property type="entry name" value="Homeodomain-like_sf"/>
</dbReference>
<dbReference type="InterPro" id="IPR017930">
    <property type="entry name" value="Myb_dom"/>
</dbReference>
<dbReference type="InterPro" id="IPR001005">
    <property type="entry name" value="SANT/Myb"/>
</dbReference>
<dbReference type="PANTHER" id="PTHR48000">
    <property type="entry name" value="OS09G0431300 PROTEIN"/>
    <property type="match status" value="1"/>
</dbReference>
<dbReference type="PANTHER" id="PTHR48000:SF37">
    <property type="entry name" value="TRANSCRIPTION FACTOR RAX1"/>
    <property type="match status" value="1"/>
</dbReference>
<dbReference type="Pfam" id="PF00249">
    <property type="entry name" value="Myb_DNA-binding"/>
    <property type="match status" value="2"/>
</dbReference>
<dbReference type="SMART" id="SM00717">
    <property type="entry name" value="SANT"/>
    <property type="match status" value="2"/>
</dbReference>
<dbReference type="SUPFAM" id="SSF46689">
    <property type="entry name" value="Homeodomain-like"/>
    <property type="match status" value="1"/>
</dbReference>
<dbReference type="PROSITE" id="PS51294">
    <property type="entry name" value="HTH_MYB"/>
    <property type="match status" value="2"/>
</dbReference>
<proteinExistence type="evidence at protein level"/>
<sequence length="329" mass="37045">MGRAPCCDKTKVKRGPWSPEEDSKLRDYIEKYGNGGNWISFPLKAGLRRCGKSCRLRWLNYLRPNIKHGDFSEEEDRIIFSLFAAIGSRWSIIAAHLPGRTDNDIKNYWNTKLRKKLLSSSSDSSSSAMASPYLNPISQDVKRPTSPTTIPSSSYNPYAENPNQYPTKSLISSINGFEAGDKQIISYINPNYPQDLYLSDSNNNTSNANGFLLNHNMCDQYKNHTSFSSDVNGIRSEIMMKQEEIMMMMMIDHHIDQRTKGYNGEFTQGYYNYYNGHGDLKQMISGTGTNSNINMGGSGSSSSSISNLAENKSSGSLLLEYKCLPYFYS</sequence>
<gene>
    <name type="primary">RAX1</name>
    <name type="synonym">MYB37</name>
    <name type="ordered locus">At5g23000</name>
    <name type="ORF">T20O7.2</name>
</gene>
<organism>
    <name type="scientific">Arabidopsis thaliana</name>
    <name type="common">Mouse-ear cress</name>
    <dbReference type="NCBI Taxonomy" id="3702"/>
    <lineage>
        <taxon>Eukaryota</taxon>
        <taxon>Viridiplantae</taxon>
        <taxon>Streptophyta</taxon>
        <taxon>Embryophyta</taxon>
        <taxon>Tracheophyta</taxon>
        <taxon>Spermatophyta</taxon>
        <taxon>Magnoliopsida</taxon>
        <taxon>eudicotyledons</taxon>
        <taxon>Gunneridae</taxon>
        <taxon>Pentapetalae</taxon>
        <taxon>rosids</taxon>
        <taxon>malvids</taxon>
        <taxon>Brassicales</taxon>
        <taxon>Brassicaceae</taxon>
        <taxon>Camelineae</taxon>
        <taxon>Arabidopsis</taxon>
    </lineage>
</organism>
<comment type="function">
    <text evidence="4 5">Transcription activator of genes involved in the regulation of meristematic competence, such as CUC2. Positively regulates axillary meristems (AMs) formation and development, especially at early phases of vegetative growth, probably by specifying a stem cell niche for AM formation. Modulates the negative regulation mediated by gibberellic acid on the timing of developmental phase transitions.</text>
</comment>
<comment type="interaction">
    <interactant intactId="EBI-15198339">
        <id>Q9FG68</id>
    </interactant>
    <interactant intactId="EBI-4424563">
        <id>Q93Z00</id>
        <label>TCP14</label>
    </interactant>
    <organismsDiffer>false</organismsDiffer>
    <experiments>3</experiments>
</comment>
<comment type="interaction">
    <interactant intactId="EBI-15198339">
        <id>Q9FG68</id>
    </interactant>
    <interactant intactId="EBI-4426144">
        <id>Q9C9L2</id>
        <label>TCP15</label>
    </interactant>
    <organismsDiffer>false</organismsDiffer>
    <experiments>3</experiments>
</comment>
<comment type="interaction">
    <interactant intactId="EBI-15198339">
        <id>Q9FG68</id>
    </interactant>
    <interactant intactId="EBI-15192325">
        <id>Q8LPR5</id>
        <label>TCP4</label>
    </interactant>
    <organismsDiffer>false</organismsDiffer>
    <experiments>3</experiments>
</comment>
<comment type="subcellular location">
    <subcellularLocation>
        <location evidence="1">Nucleus</location>
    </subcellularLocation>
</comment>
<comment type="tissue specificity">
    <text evidence="4">Mostly expressed in roots. Also present in shoot tips and flower buds.</text>
</comment>
<comment type="developmental stage">
    <text evidence="4 5">Accumulates in an adaxial ball-shaped set of cells in three to five cell layers around the L3 layer of the shoot apical meristem (SAM) in youg plantlets. Later, expressed transiently at the center of the boundary between the SAM and developing leaf primordia. In the inflorescence meristem, confined to the axils of flower primordia.</text>
</comment>
<comment type="induction">
    <text evidence="4">By a shift from short days to long days, in the axils of primordia on the elongating stem.</text>
</comment>
<protein>
    <recommendedName>
        <fullName>Transcription factor RAX1</fullName>
    </recommendedName>
    <alternativeName>
        <fullName>Myb-related protein 37</fullName>
        <shortName>AtMYB37</shortName>
    </alternativeName>
    <alternativeName>
        <fullName>Protein REGULATOR OF AXILLARY MERISTEMS 1</fullName>
    </alternativeName>
</protein>
<keyword id="KW-0010">Activator</keyword>
<keyword id="KW-0217">Developmental protein</keyword>
<keyword id="KW-0238">DNA-binding</keyword>
<keyword id="KW-0539">Nucleus</keyword>
<keyword id="KW-1185">Reference proteome</keyword>
<keyword id="KW-0677">Repeat</keyword>
<keyword id="KW-0804">Transcription</keyword>
<keyword id="KW-0805">Transcription regulation</keyword>
<reference key="1">
    <citation type="submission" date="1999-01" db="EMBL/GenBank/DDBJ databases">
        <title>A MYB transcription factor and a gene similar to MYJ24.1 are encoded in the region between MRN17 and MYJ24.</title>
        <authorList>
            <person name="Kroymann J."/>
            <person name="Schnabelrauch D."/>
            <person name="Mitchell-Olds T."/>
        </authorList>
    </citation>
    <scope>NUCLEOTIDE SEQUENCE [GENOMIC DNA]</scope>
    <source>
        <strain>cv. Columbia</strain>
    </source>
</reference>
<reference key="2">
    <citation type="submission" date="2004-01" db="EMBL/GenBank/DDBJ databases">
        <title>The MYB transcription factor family in Arabidopsis: a genome-wide cloning and expression pattern analysis.</title>
        <authorList>
            <person name="Qu L.-J."/>
            <person name="Gu H."/>
        </authorList>
    </citation>
    <scope>NUCLEOTIDE SEQUENCE [MRNA]</scope>
</reference>
<reference key="3">
    <citation type="submission" date="1999-04" db="EMBL/GenBank/DDBJ databases">
        <title>Structural analysis of Arabidopsis thaliana chromosome 5. XI.</title>
        <authorList>
            <person name="Kaneko T."/>
            <person name="Katoh T."/>
            <person name="Asamizu E."/>
            <person name="Sato S."/>
            <person name="Nakamura Y."/>
            <person name="Kotani H."/>
            <person name="Tabata S."/>
        </authorList>
    </citation>
    <scope>NUCLEOTIDE SEQUENCE [LARGE SCALE GENOMIC DNA]</scope>
    <source>
        <strain>cv. Columbia</strain>
    </source>
</reference>
<reference key="4">
    <citation type="journal article" date="2017" name="Plant J.">
        <title>Araport11: a complete reannotation of the Arabidopsis thaliana reference genome.</title>
        <authorList>
            <person name="Cheng C.Y."/>
            <person name="Krishnakumar V."/>
            <person name="Chan A.P."/>
            <person name="Thibaud-Nissen F."/>
            <person name="Schobel S."/>
            <person name="Town C.D."/>
        </authorList>
    </citation>
    <scope>GENOME REANNOTATION</scope>
    <source>
        <strain>cv. Columbia</strain>
    </source>
</reference>
<reference key="5">
    <citation type="journal article" date="2006" name="Plant Biotechnol. J.">
        <title>Simultaneous high-throughput recombinational cloning of open reading frames in closed and open configurations.</title>
        <authorList>
            <person name="Underwood B.A."/>
            <person name="Vanderhaeghen R."/>
            <person name="Whitford R."/>
            <person name="Town C.D."/>
            <person name="Hilson P."/>
        </authorList>
    </citation>
    <scope>NUCLEOTIDE SEQUENCE [LARGE SCALE MRNA]</scope>
    <source>
        <strain>cv. Columbia</strain>
    </source>
</reference>
<reference key="6">
    <citation type="submission" date="2004-09" db="EMBL/GenBank/DDBJ databases">
        <title>Large-scale analysis of RIKEN Arabidopsis full-length (RAFL) cDNAs.</title>
        <authorList>
            <person name="Totoki Y."/>
            <person name="Seki M."/>
            <person name="Ishida J."/>
            <person name="Nakajima M."/>
            <person name="Enju A."/>
            <person name="Kamiya A."/>
            <person name="Narusaka M."/>
            <person name="Shin-i T."/>
            <person name="Nakagawa M."/>
            <person name="Sakamoto N."/>
            <person name="Oishi K."/>
            <person name="Kohara Y."/>
            <person name="Kobayashi M."/>
            <person name="Toyoda A."/>
            <person name="Sakaki Y."/>
            <person name="Sakurai T."/>
            <person name="Iida K."/>
            <person name="Akiyama K."/>
            <person name="Satou M."/>
            <person name="Toyoda T."/>
            <person name="Konagaya A."/>
            <person name="Carninci P."/>
            <person name="Kawai J."/>
            <person name="Hayashizaki Y."/>
            <person name="Shinozaki K."/>
        </authorList>
    </citation>
    <scope>NUCLEOTIDE SEQUENCE [LARGE SCALE MRNA]</scope>
    <source>
        <strain>cv. Columbia</strain>
    </source>
</reference>
<reference key="7">
    <citation type="journal article" date="1998" name="Plant J.">
        <title>Towards functional characterisation of the members of the R2R3-MYB gene family from Arabidopsis thaliana.</title>
        <authorList>
            <person name="Kranz H.D."/>
            <person name="Denekamp M."/>
            <person name="Greco R."/>
            <person name="Jin H.-L."/>
            <person name="Leyva A."/>
            <person name="Meissner R.C."/>
            <person name="Petroni K."/>
            <person name="Urzainqui A."/>
            <person name="Bevan M."/>
            <person name="Martin C."/>
            <person name="Smeekens S."/>
            <person name="Tonelli C."/>
            <person name="Paz-Ares J."/>
            <person name="Weisshaar B."/>
        </authorList>
    </citation>
    <scope>NUCLEOTIDE SEQUENCE [MRNA] OF 55-329</scope>
    <source>
        <strain>cv. Columbia</strain>
    </source>
</reference>
<reference key="8">
    <citation type="journal article" date="2003" name="Proc. Natl. Acad. Sci. U.S.A.">
        <title>Evolutionary dynamics of an Arabidopsis insect resistance quantitative trait locus.</title>
        <authorList>
            <person name="Kroymann J."/>
            <person name="Donnerhacke S."/>
            <person name="Schnabelrauch D."/>
            <person name="Mitchell-Olds T."/>
        </authorList>
    </citation>
    <scope>NUCLEOTIDE SEQUENCE [GENOMIC DNA] OF 90-329</scope>
    <scope>VARIANTS ARG-142; LYS-143; PHE-170; ASN-222 AND VAL-245</scope>
    <source>
        <strain>cv. Aa-0</strain>
        <strain>cv. Ag-0</strain>
        <strain>cv. Bl-0</strain>
        <strain>cv. Bla-10</strain>
        <strain>cv. Cal-0</strain>
        <strain>cv. Can-0</strain>
        <strain>cv. Cnt-1</strain>
        <strain>cv. Cvi-0</strain>
        <strain>cv. Di-0</strain>
        <strain>cv. Di-1</strain>
        <strain>cv. Di-G</strain>
        <strain>cv. Ema-1</strain>
        <strain>cv. HOG</strain>
        <strain>cv. Ka-0</strain>
        <strain>cv. Kas-1</strain>
        <strain>cv. Kil-1</strain>
        <strain>cv. Kon</strain>
        <strain>cv. Landsberg erecta</strain>
        <strain>cv. Lip-0</strain>
        <strain>cv. Ma-0</strain>
        <strain>cv. Mr-0</strain>
        <strain>cv. Mrk-0</strain>
        <strain>cv. Mt-0</strain>
        <strain>cv. No-0</strain>
        <strain>cv. Oy-0</strain>
        <strain>cv. Pa-1</strain>
        <strain>cv. Per-1</strain>
        <strain>cv. Petergof</strain>
        <strain>cv. Pi-0</strain>
        <strain>cv. Pla-0</strain>
        <strain>cv. Sei-0</strain>
        <strain>cv. Sorbo</strain>
        <strain>cv. Su-0</strain>
        <strain>cv. Tac-0</strain>
        <strain>cv. Tsu-1</strain>
        <strain>cv. Wl-0</strain>
        <strain>cv. Yo-0</strain>
    </source>
</reference>
<reference key="9">
    <citation type="journal article" date="2007" name="Genetics">
        <title>The genetic architecture of shoot branching in Arabidopsis thaliana: a comparative assessment of candidate gene associations vs. quantitative trait locus mapping.</title>
        <authorList>
            <person name="Ehrenreich I.M."/>
            <person name="Stafford P.A."/>
            <person name="Purugganan M.D."/>
        </authorList>
    </citation>
    <scope>NUCLEOTIDE SEQUENCE [GENOMIC DNA] OF 119-307</scope>
    <scope>VARIANTS ARG-142; LYS-143; PHE-170; ASN-222 AND VAL-245</scope>
    <source>
        <strain>cv. Ag-0</strain>
        <strain>cv. An-1</strain>
        <strain>cv. Br-0</strain>
        <strain>cv. C24</strain>
        <strain>cv. Ct-1</strain>
        <strain>cv. Cvi-1</strain>
        <strain>cv. Edi-0</strain>
        <strain>cv. Ga-0</strain>
        <strain>cv. Kas-1</strain>
        <strain>cv. Kin-0</strain>
        <strain>cv. Landsberg erecta</strain>
        <strain>cv. Ll-0</strain>
        <strain>cv. Lz-0</strain>
        <strain>cv. Ms-0</strain>
        <strain>cv. Mt-0</strain>
        <strain>cv. Nd-1</strain>
        <strain>cv. Nok-3</strain>
        <strain>cv. Oy-0</strain>
        <strain>cv. Se-0</strain>
        <strain>cv. Sorbo</strain>
        <strain>cv. Tsu-1</strain>
        <strain>cv. Van-0</strain>
        <strain>cv. Wa-1</strain>
        <strain>cv. Wassilewskija</strain>
    </source>
</reference>
<reference key="10">
    <citation type="journal article" date="2001" name="Curr. Opin. Plant Biol.">
        <title>The R2R3-MYB gene family in Arabidopsis thaliana.</title>
        <authorList>
            <person name="Stracke R."/>
            <person name="Werber M."/>
            <person name="Weisshaar B."/>
        </authorList>
    </citation>
    <scope>GENE FAMILY</scope>
    <scope>NOMENCLATURE</scope>
    <source>
        <strain>cv. Columbia</strain>
    </source>
</reference>
<reference key="11">
    <citation type="journal article" date="2006" name="Plant Cell">
        <title>Blind homologous R2R3 Myb genes control the pattern of lateral meristem initiation in Arabidopsis.</title>
        <authorList>
            <person name="Mueller D."/>
            <person name="Schmitz G."/>
            <person name="Theres K."/>
        </authorList>
    </citation>
    <scope>FUNCTION</scope>
    <scope>DEVELOPMENTAL STAGE</scope>
    <scope>INDUCTION</scope>
    <scope>TISSUE SPECIFICITY</scope>
</reference>
<reference key="12">
    <citation type="journal article" date="2006" name="Plant Cell">
        <title>Arabidopsis REGULATOR OF AXILLARY MERISTEMS1 controls a leaf axil stem cell niche and modulates vegetative development.</title>
        <authorList>
            <person name="Keller T."/>
            <person name="Abbott J."/>
            <person name="Moritz T."/>
            <person name="Doerner P."/>
        </authorList>
    </citation>
    <scope>FUNCTION</scope>
    <scope>DEVELOPMENTAL STAGE</scope>
</reference>
<reference key="13">
    <citation type="journal article" date="2006" name="Plant Mol. Biol.">
        <title>The MYB transcription factor superfamily of Arabidopsis: expression analysis and phylogenetic comparison with the rice MYB family.</title>
        <authorList>
            <person name="Chen Y."/>
            <person name="Yang X."/>
            <person name="He K."/>
            <person name="Liu M."/>
            <person name="Li J."/>
            <person name="Gao Z."/>
            <person name="Lin Z."/>
            <person name="Zhang Y."/>
            <person name="Wang X."/>
            <person name="Qiu X."/>
            <person name="Shen Y."/>
            <person name="Zhang L."/>
            <person name="Deng X."/>
            <person name="Luo J."/>
            <person name="Deng X.-W."/>
            <person name="Chen Z."/>
            <person name="Gu H."/>
            <person name="Qu L.-J."/>
        </authorList>
    </citation>
    <scope>GENE FAMILY</scope>
</reference>
<feature type="chain" id="PRO_0000312431" description="Transcription factor RAX1">
    <location>
        <begin position="1"/>
        <end position="329"/>
    </location>
</feature>
<feature type="domain" description="HTH myb-type 1" evidence="1">
    <location>
        <begin position="9"/>
        <end position="62"/>
    </location>
</feature>
<feature type="domain" description="HTH myb-type 2" evidence="1">
    <location>
        <begin position="63"/>
        <end position="117"/>
    </location>
</feature>
<feature type="DNA-binding region" description="H-T-H motif" evidence="1">
    <location>
        <begin position="38"/>
        <end position="62"/>
    </location>
</feature>
<feature type="DNA-binding region" description="H-T-H motif" evidence="1">
    <location>
        <begin position="90"/>
        <end position="113"/>
    </location>
</feature>
<feature type="region of interest" description="Disordered" evidence="2">
    <location>
        <begin position="122"/>
        <end position="162"/>
    </location>
</feature>
<feature type="compositionally biased region" description="Low complexity" evidence="2">
    <location>
        <begin position="122"/>
        <end position="131"/>
    </location>
</feature>
<feature type="compositionally biased region" description="Low complexity" evidence="2">
    <location>
        <begin position="144"/>
        <end position="154"/>
    </location>
</feature>
<feature type="sequence variant" description="In strain: cv. Ag-0." evidence="3 6">
    <original>K</original>
    <variation>R</variation>
    <location>
        <position position="142"/>
    </location>
</feature>
<feature type="sequence variant" description="In strain: cv. Br-0 and cv. Cal-0." evidence="3 6">
    <original>R</original>
    <variation>K</variation>
    <location>
        <position position="143"/>
    </location>
</feature>
<feature type="sequence variant" description="In strain: cv. Cvi-0 and cv. Cvi-1." evidence="3 6">
    <original>L</original>
    <variation>F</variation>
    <location>
        <position position="170"/>
    </location>
</feature>
<feature type="sequence variant" description="In strain: cv. An-1, cv. Bl-0, cv. Bla-10, cv. C24, cv. Br-0, cv. Cal-0, cv. Can-0, cv. Cnt-1, cv. Kon, cv. Ct-1, cv. Cvi-0, cv. Cvi-1, cv. Di-1, cv. Di-G, cv. Edi-0, cv. Ema-1, cv. Ga-0, cv. Hodja-Obi-Garm, cv. Ka-0, cv. Kas-1, cv. Kil-1, cv. Landsberg erecta, cv. Lip-0, cv. Ll-0, cv. Lz-0, cv. Mr-0, cv. Mrk-0, cv. Ms-0, cv. Nd-1, cv. No-0, cv. Nok-3, cv. Oy-0, cv. Pa-1, cv. Per-1, cv. Petergof, cv. Pi-0, cv. Pla-0, cv, cv. Se-0. Sei-0, cv. Sorbo, cv. Su-0, cv. Tac-0, cv. Tsu-1, cv. Van-0, cv. Wa-1, cv. Wl-0, cv. Wassilewskija and cv. Yo-0." evidence="3 6">
    <original>K</original>
    <variation>N</variation>
    <location>
        <position position="222"/>
    </location>
</feature>
<feature type="sequence variant" description="In strain: cv. Cvi-0 and cv. Cvi-1." evidence="3 6">
    <original>I</original>
    <variation>V</variation>
    <location>
        <position position="245"/>
    </location>
</feature>
<feature type="sequence conflict" description="In Ref. 7; AAC83601." evidence="7" ref="7">
    <original>Y</original>
    <variation>F</variation>
    <location>
        <position position="61"/>
    </location>
</feature>
<feature type="sequence conflict" description="In Ref. 7; AAC83601." evidence="7" ref="7">
    <original>V</original>
    <variation>A</variation>
    <location>
        <position position="231"/>
    </location>
</feature>
<feature type="sequence conflict" description="In Ref. 7; AAC83601." evidence="7" ref="7">
    <original>R</original>
    <variation>K</variation>
    <location>
        <position position="258"/>
    </location>
</feature>